<sequence>MALKEYKPTSPARRHMTVADFAEITKAKPEKRLTKPVRKSGGRNAHGKVTTRHIGGGHKRRYRLIDWRRDKDGVPAKVAAIEYDPNRTARIALLHYLDGEKRYILAPVGVAVGDTLLSGADVDIRPGNALPVRTIPLGTVIHNVETAPGSGAKMIRTAGSFGQLMAKEGGYAQIRLPSGEVRKVLQDCKATIGQLGNVESSSVRVGKAGKSRWLGIRPTVRGLAMNPVDHPHGGGEGKSGQGNPHPVSPWGQKTKGLKTRNNRRTDKFIVTRRRPGVRNTQR</sequence>
<evidence type="ECO:0000255" key="1">
    <source>
        <dbReference type="HAMAP-Rule" id="MF_01320"/>
    </source>
</evidence>
<evidence type="ECO:0000256" key="2">
    <source>
        <dbReference type="SAM" id="MobiDB-lite"/>
    </source>
</evidence>
<evidence type="ECO:0000305" key="3"/>
<keyword id="KW-0687">Ribonucleoprotein</keyword>
<keyword id="KW-0689">Ribosomal protein</keyword>
<keyword id="KW-0694">RNA-binding</keyword>
<keyword id="KW-0699">rRNA-binding</keyword>
<dbReference type="EMBL" id="CP001359">
    <property type="protein sequence ID" value="ACL65362.1"/>
    <property type="molecule type" value="Genomic_DNA"/>
</dbReference>
<dbReference type="RefSeq" id="WP_012525976.1">
    <property type="nucleotide sequence ID" value="NC_011891.1"/>
</dbReference>
<dbReference type="SMR" id="B8J863"/>
<dbReference type="KEGG" id="acp:A2cp1_2021"/>
<dbReference type="HOGENOM" id="CLU_036235_2_1_7"/>
<dbReference type="Proteomes" id="UP000007089">
    <property type="component" value="Chromosome"/>
</dbReference>
<dbReference type="GO" id="GO:0015934">
    <property type="term" value="C:large ribosomal subunit"/>
    <property type="evidence" value="ECO:0007669"/>
    <property type="project" value="InterPro"/>
</dbReference>
<dbReference type="GO" id="GO:0019843">
    <property type="term" value="F:rRNA binding"/>
    <property type="evidence" value="ECO:0007669"/>
    <property type="project" value="UniProtKB-UniRule"/>
</dbReference>
<dbReference type="GO" id="GO:0003735">
    <property type="term" value="F:structural constituent of ribosome"/>
    <property type="evidence" value="ECO:0007669"/>
    <property type="project" value="InterPro"/>
</dbReference>
<dbReference type="GO" id="GO:0016740">
    <property type="term" value="F:transferase activity"/>
    <property type="evidence" value="ECO:0007669"/>
    <property type="project" value="InterPro"/>
</dbReference>
<dbReference type="GO" id="GO:0002181">
    <property type="term" value="P:cytoplasmic translation"/>
    <property type="evidence" value="ECO:0007669"/>
    <property type="project" value="TreeGrafter"/>
</dbReference>
<dbReference type="FunFam" id="2.30.30.30:FF:000001">
    <property type="entry name" value="50S ribosomal protein L2"/>
    <property type="match status" value="1"/>
</dbReference>
<dbReference type="FunFam" id="2.40.50.140:FF:000003">
    <property type="entry name" value="50S ribosomal protein L2"/>
    <property type="match status" value="1"/>
</dbReference>
<dbReference type="FunFam" id="4.10.950.10:FF:000001">
    <property type="entry name" value="50S ribosomal protein L2"/>
    <property type="match status" value="1"/>
</dbReference>
<dbReference type="Gene3D" id="2.30.30.30">
    <property type="match status" value="1"/>
</dbReference>
<dbReference type="Gene3D" id="2.40.50.140">
    <property type="entry name" value="Nucleic acid-binding proteins"/>
    <property type="match status" value="1"/>
</dbReference>
<dbReference type="Gene3D" id="4.10.950.10">
    <property type="entry name" value="Ribosomal protein L2, domain 3"/>
    <property type="match status" value="1"/>
</dbReference>
<dbReference type="HAMAP" id="MF_01320_B">
    <property type="entry name" value="Ribosomal_uL2_B"/>
    <property type="match status" value="1"/>
</dbReference>
<dbReference type="InterPro" id="IPR012340">
    <property type="entry name" value="NA-bd_OB-fold"/>
</dbReference>
<dbReference type="InterPro" id="IPR014722">
    <property type="entry name" value="Rib_uL2_dom2"/>
</dbReference>
<dbReference type="InterPro" id="IPR002171">
    <property type="entry name" value="Ribosomal_uL2"/>
</dbReference>
<dbReference type="InterPro" id="IPR005880">
    <property type="entry name" value="Ribosomal_uL2_bac/org-type"/>
</dbReference>
<dbReference type="InterPro" id="IPR022669">
    <property type="entry name" value="Ribosomal_uL2_C"/>
</dbReference>
<dbReference type="InterPro" id="IPR014726">
    <property type="entry name" value="Ribosomal_uL2_dom3"/>
</dbReference>
<dbReference type="InterPro" id="IPR022666">
    <property type="entry name" value="Ribosomal_uL2_RNA-bd_dom"/>
</dbReference>
<dbReference type="InterPro" id="IPR008991">
    <property type="entry name" value="Translation_prot_SH3-like_sf"/>
</dbReference>
<dbReference type="NCBIfam" id="TIGR01171">
    <property type="entry name" value="rplB_bact"/>
    <property type="match status" value="1"/>
</dbReference>
<dbReference type="PANTHER" id="PTHR13691:SF5">
    <property type="entry name" value="LARGE RIBOSOMAL SUBUNIT PROTEIN UL2M"/>
    <property type="match status" value="1"/>
</dbReference>
<dbReference type="PANTHER" id="PTHR13691">
    <property type="entry name" value="RIBOSOMAL PROTEIN L2"/>
    <property type="match status" value="1"/>
</dbReference>
<dbReference type="Pfam" id="PF00181">
    <property type="entry name" value="Ribosomal_L2"/>
    <property type="match status" value="1"/>
</dbReference>
<dbReference type="Pfam" id="PF03947">
    <property type="entry name" value="Ribosomal_L2_C"/>
    <property type="match status" value="1"/>
</dbReference>
<dbReference type="PIRSF" id="PIRSF002158">
    <property type="entry name" value="Ribosomal_L2"/>
    <property type="match status" value="1"/>
</dbReference>
<dbReference type="SMART" id="SM01383">
    <property type="entry name" value="Ribosomal_L2"/>
    <property type="match status" value="1"/>
</dbReference>
<dbReference type="SMART" id="SM01382">
    <property type="entry name" value="Ribosomal_L2_C"/>
    <property type="match status" value="1"/>
</dbReference>
<dbReference type="SUPFAM" id="SSF50249">
    <property type="entry name" value="Nucleic acid-binding proteins"/>
    <property type="match status" value="1"/>
</dbReference>
<dbReference type="SUPFAM" id="SSF50104">
    <property type="entry name" value="Translation proteins SH3-like domain"/>
    <property type="match status" value="1"/>
</dbReference>
<feature type="chain" id="PRO_1000165715" description="Large ribosomal subunit protein uL2">
    <location>
        <begin position="1"/>
        <end position="282"/>
    </location>
</feature>
<feature type="region of interest" description="Disordered" evidence="2">
    <location>
        <begin position="31"/>
        <end position="54"/>
    </location>
</feature>
<feature type="region of interest" description="Disordered" evidence="2">
    <location>
        <begin position="223"/>
        <end position="282"/>
    </location>
</feature>
<feature type="compositionally biased region" description="Basic residues" evidence="2">
    <location>
        <begin position="34"/>
        <end position="54"/>
    </location>
</feature>
<feature type="compositionally biased region" description="Basic residues" evidence="2">
    <location>
        <begin position="270"/>
        <end position="282"/>
    </location>
</feature>
<protein>
    <recommendedName>
        <fullName evidence="1">Large ribosomal subunit protein uL2</fullName>
    </recommendedName>
    <alternativeName>
        <fullName evidence="3">50S ribosomal protein L2</fullName>
    </alternativeName>
</protein>
<proteinExistence type="inferred from homology"/>
<reference key="1">
    <citation type="submission" date="2009-01" db="EMBL/GenBank/DDBJ databases">
        <title>Complete sequence of Anaeromyxobacter dehalogenans 2CP-1.</title>
        <authorList>
            <person name="Lucas S."/>
            <person name="Copeland A."/>
            <person name="Lapidus A."/>
            <person name="Glavina del Rio T."/>
            <person name="Dalin E."/>
            <person name="Tice H."/>
            <person name="Bruce D."/>
            <person name="Goodwin L."/>
            <person name="Pitluck S."/>
            <person name="Saunders E."/>
            <person name="Brettin T."/>
            <person name="Detter J.C."/>
            <person name="Han C."/>
            <person name="Larimer F."/>
            <person name="Land M."/>
            <person name="Hauser L."/>
            <person name="Kyrpides N."/>
            <person name="Ovchinnikova G."/>
            <person name="Beliaev A.S."/>
            <person name="Richardson P."/>
        </authorList>
    </citation>
    <scope>NUCLEOTIDE SEQUENCE [LARGE SCALE GENOMIC DNA]</scope>
    <source>
        <strain>2CP-1 / ATCC BAA-258</strain>
    </source>
</reference>
<comment type="function">
    <text evidence="1">One of the primary rRNA binding proteins. Required for association of the 30S and 50S subunits to form the 70S ribosome, for tRNA binding and peptide bond formation. It has been suggested to have peptidyltransferase activity; this is somewhat controversial. Makes several contacts with the 16S rRNA in the 70S ribosome.</text>
</comment>
<comment type="subunit">
    <text evidence="1">Part of the 50S ribosomal subunit. Forms a bridge to the 30S subunit in the 70S ribosome.</text>
</comment>
<comment type="similarity">
    <text evidence="1">Belongs to the universal ribosomal protein uL2 family.</text>
</comment>
<organism>
    <name type="scientific">Anaeromyxobacter dehalogenans (strain 2CP-1 / ATCC BAA-258)</name>
    <dbReference type="NCBI Taxonomy" id="455488"/>
    <lineage>
        <taxon>Bacteria</taxon>
        <taxon>Pseudomonadati</taxon>
        <taxon>Myxococcota</taxon>
        <taxon>Myxococcia</taxon>
        <taxon>Myxococcales</taxon>
        <taxon>Cystobacterineae</taxon>
        <taxon>Anaeromyxobacteraceae</taxon>
        <taxon>Anaeromyxobacter</taxon>
    </lineage>
</organism>
<gene>
    <name evidence="1" type="primary">rplB</name>
    <name type="ordered locus">A2cp1_2021</name>
</gene>
<accession>B8J863</accession>
<name>RL2_ANAD2</name>